<feature type="chain" id="PRO_0000059235" description="Uncharacterized glycosyltransferase RP128">
    <location>
        <begin position="1"/>
        <end position="292"/>
    </location>
</feature>
<keyword id="KW-0328">Glycosyltransferase</keyword>
<keyword id="KW-1185">Reference proteome</keyword>
<keyword id="KW-0808">Transferase</keyword>
<accession>O05944</accession>
<reference key="1">
    <citation type="journal article" date="1997" name="Microbiology">
        <title>Genomic rearrangements during evolution of the obligate intracellular parasite Rickettsia prowazekii as inferred from an analysis of 52015 bp nucleotide sequence.</title>
        <authorList>
            <person name="Andersson J.O."/>
            <person name="Andersson S.G.E."/>
        </authorList>
    </citation>
    <scope>NUCLEOTIDE SEQUENCE [GENOMIC DNA]</scope>
    <source>
        <strain>Madrid E</strain>
    </source>
</reference>
<reference key="2">
    <citation type="journal article" date="1998" name="Nature">
        <title>The genome sequence of Rickettsia prowazekii and the origin of mitochondria.</title>
        <authorList>
            <person name="Andersson S.G.E."/>
            <person name="Zomorodipour A."/>
            <person name="Andersson J.O."/>
            <person name="Sicheritz-Ponten T."/>
            <person name="Alsmark U.C.M."/>
            <person name="Podowski R.M."/>
            <person name="Naeslund A.K."/>
            <person name="Eriksson A.-S."/>
            <person name="Winkler H.H."/>
            <person name="Kurland C.G."/>
        </authorList>
    </citation>
    <scope>NUCLEOTIDE SEQUENCE [LARGE SCALE GENOMIC DNA]</scope>
    <source>
        <strain>Madrid E</strain>
    </source>
</reference>
<comment type="similarity">
    <text evidence="1">Belongs to the glycosyltransferase 2 family. WaaE/KdtX subfamily.</text>
</comment>
<evidence type="ECO:0000305" key="1"/>
<organism>
    <name type="scientific">Rickettsia prowazekii (strain Madrid E)</name>
    <dbReference type="NCBI Taxonomy" id="272947"/>
    <lineage>
        <taxon>Bacteria</taxon>
        <taxon>Pseudomonadati</taxon>
        <taxon>Pseudomonadota</taxon>
        <taxon>Alphaproteobacteria</taxon>
        <taxon>Rickettsiales</taxon>
        <taxon>Rickettsiaceae</taxon>
        <taxon>Rickettsieae</taxon>
        <taxon>Rickettsia</taxon>
        <taxon>typhus group</taxon>
    </lineage>
</organism>
<gene>
    <name type="ordered locus">RP218</name>
</gene>
<name>Y218_RICPR</name>
<protein>
    <recommendedName>
        <fullName>Uncharacterized glycosyltransferase RP128</fullName>
        <ecNumber>2.4.-.-</ecNumber>
    </recommendedName>
</protein>
<proteinExistence type="inferred from homology"/>
<sequence>MKKISTFIITKNESARIARAINSVKNITDEVIVVDNESTDDTVHIAKTLGAQVIVKPWLGYVGQKSFAESMCVNDWVLNIDADEELSQELQDEIEYIFTSHNQDRYLAYQIKLLIMYRGDQKPRMFAPLNKCTRLYNKKFASFANTINSTTHDSVVFNKDVDFTGKIYLLNGIAYHYSGTSIEQLVNKANFYSSEQAKDLVKQGKKLSNFRLATEMIWCFLKAFFIRRYFVFGFDGFVDSIIFAFARFLRLAKLRDLSLKSQNVITSDNYINYCMDFKSLLQQKKRNRYPKK</sequence>
<dbReference type="EC" id="2.4.-.-"/>
<dbReference type="EMBL" id="Y11780">
    <property type="protein sequence ID" value="CAA72466.1"/>
    <property type="molecule type" value="Genomic_DNA"/>
</dbReference>
<dbReference type="EMBL" id="AJ235270">
    <property type="protein sequence ID" value="CAA14681.1"/>
    <property type="molecule type" value="Genomic_DNA"/>
</dbReference>
<dbReference type="PIR" id="B71733">
    <property type="entry name" value="B71733"/>
</dbReference>
<dbReference type="RefSeq" id="NP_220604.1">
    <property type="nucleotide sequence ID" value="NC_000963.1"/>
</dbReference>
<dbReference type="RefSeq" id="WP_004598575.1">
    <property type="nucleotide sequence ID" value="NC_000963.1"/>
</dbReference>
<dbReference type="SMR" id="O05944"/>
<dbReference type="STRING" id="272947.gene:17555299"/>
<dbReference type="CAZy" id="GT2">
    <property type="family name" value="Glycosyltransferase Family 2"/>
</dbReference>
<dbReference type="EnsemblBacteria" id="CAA14681">
    <property type="protein sequence ID" value="CAA14681"/>
    <property type="gene ID" value="CAA14681"/>
</dbReference>
<dbReference type="KEGG" id="rpr:RP218"/>
<dbReference type="PATRIC" id="fig|272947.5.peg.225"/>
<dbReference type="eggNOG" id="COG0463">
    <property type="taxonomic scope" value="Bacteria"/>
</dbReference>
<dbReference type="HOGENOM" id="CLU_065962_1_0_5"/>
<dbReference type="OrthoDB" id="7527830at2"/>
<dbReference type="Proteomes" id="UP000002480">
    <property type="component" value="Chromosome"/>
</dbReference>
<dbReference type="GO" id="GO:0016757">
    <property type="term" value="F:glycosyltransferase activity"/>
    <property type="evidence" value="ECO:0007669"/>
    <property type="project" value="UniProtKB-KW"/>
</dbReference>
<dbReference type="CDD" id="cd02511">
    <property type="entry name" value="Beta4Glucosyltransferase"/>
    <property type="match status" value="1"/>
</dbReference>
<dbReference type="Gene3D" id="3.90.550.10">
    <property type="entry name" value="Spore Coat Polysaccharide Biosynthesis Protein SpsA, Chain A"/>
    <property type="match status" value="1"/>
</dbReference>
<dbReference type="InterPro" id="IPR001173">
    <property type="entry name" value="Glyco_trans_2-like"/>
</dbReference>
<dbReference type="InterPro" id="IPR029044">
    <property type="entry name" value="Nucleotide-diphossugar_trans"/>
</dbReference>
<dbReference type="PANTHER" id="PTHR43630:SF2">
    <property type="entry name" value="GLYCOSYLTRANSFERASE"/>
    <property type="match status" value="1"/>
</dbReference>
<dbReference type="PANTHER" id="PTHR43630">
    <property type="entry name" value="POLY-BETA-1,6-N-ACETYL-D-GLUCOSAMINE SYNTHASE"/>
    <property type="match status" value="1"/>
</dbReference>
<dbReference type="Pfam" id="PF00535">
    <property type="entry name" value="Glycos_transf_2"/>
    <property type="match status" value="1"/>
</dbReference>
<dbReference type="SUPFAM" id="SSF53448">
    <property type="entry name" value="Nucleotide-diphospho-sugar transferases"/>
    <property type="match status" value="1"/>
</dbReference>